<sequence>MAAEIICVGTEILLGDIVNSNSQYLAQEFAKLGISHYFQSVVGDNIARIHSLLEIAVQRGTEIIVFTGGLGPTPDDLTTEAIAAYFQTPLIERPEIVADITTKFAQRGRTMTPNNRKQALLPEGAEILPNPTGTAPGLIWQPIEGLTIFTFPGVPGEMKRMWQETAVPYLKAQGYGQIVIHSEMMRFRGIGESSLAAKVNHLFALTNPTVAPYASKGEVKLRVAARAESVAAAKKLMDPVVAEIKAIAGLDYFGSDGASLPLVIGDLLRTRQETLAVAESCTGGGLGALITSVSGSSDYFLGGITAYANAVKINLLGVNSADLQNQGAVSETVAQQMALGAKQALDSDWGIGITGIAGPKSDDSAKPIGLVCIAWADPQNHVFSHTYRYGTDRDRELIRYLSACDALDGLRRYLKSDKS</sequence>
<name>CINAL_PICP2</name>
<feature type="chain" id="PRO_1000100340" description="CinA-like protein">
    <location>
        <begin position="1"/>
        <end position="419"/>
    </location>
</feature>
<keyword id="KW-1185">Reference proteome</keyword>
<gene>
    <name type="ordered locus">SYNPCC7002_A2525</name>
</gene>
<organism>
    <name type="scientific">Picosynechococcus sp. (strain ATCC 27264 / PCC 7002 / PR-6)</name>
    <name type="common">Agmenellum quadruplicatum</name>
    <dbReference type="NCBI Taxonomy" id="32049"/>
    <lineage>
        <taxon>Bacteria</taxon>
        <taxon>Bacillati</taxon>
        <taxon>Cyanobacteriota</taxon>
        <taxon>Cyanophyceae</taxon>
        <taxon>Oscillatoriophycideae</taxon>
        <taxon>Chroococcales</taxon>
        <taxon>Geminocystaceae</taxon>
        <taxon>Picosynechococcus</taxon>
    </lineage>
</organism>
<proteinExistence type="inferred from homology"/>
<reference key="1">
    <citation type="submission" date="2008-02" db="EMBL/GenBank/DDBJ databases">
        <title>Complete sequence of Synechococcus sp. PCC 7002.</title>
        <authorList>
            <person name="Li T."/>
            <person name="Zhao J."/>
            <person name="Zhao C."/>
            <person name="Liu Z."/>
            <person name="Zhao F."/>
            <person name="Marquardt J."/>
            <person name="Nomura C.T."/>
            <person name="Persson S."/>
            <person name="Detter J.C."/>
            <person name="Richardson P.M."/>
            <person name="Lanz C."/>
            <person name="Schuster S.C."/>
            <person name="Wang J."/>
            <person name="Li S."/>
            <person name="Huang X."/>
            <person name="Cai T."/>
            <person name="Yu Z."/>
            <person name="Luo J."/>
            <person name="Zhao J."/>
            <person name="Bryant D.A."/>
        </authorList>
    </citation>
    <scope>NUCLEOTIDE SEQUENCE [LARGE SCALE GENOMIC DNA]</scope>
    <source>
        <strain>ATCC 27264 / PCC 7002 / PR-6</strain>
    </source>
</reference>
<comment type="similarity">
    <text evidence="1">Belongs to the CinA family.</text>
</comment>
<evidence type="ECO:0000255" key="1">
    <source>
        <dbReference type="HAMAP-Rule" id="MF_00226"/>
    </source>
</evidence>
<accession>B1XKM7</accession>
<dbReference type="EMBL" id="CP000951">
    <property type="protein sequence ID" value="ACB00502.1"/>
    <property type="molecule type" value="Genomic_DNA"/>
</dbReference>
<dbReference type="RefSeq" id="WP_012308120.1">
    <property type="nucleotide sequence ID" value="NZ_JAHHPU010000003.1"/>
</dbReference>
<dbReference type="SMR" id="B1XKM7"/>
<dbReference type="STRING" id="32049.SYNPCC7002_A2525"/>
<dbReference type="KEGG" id="syp:SYNPCC7002_A2525"/>
<dbReference type="eggNOG" id="COG1058">
    <property type="taxonomic scope" value="Bacteria"/>
</dbReference>
<dbReference type="eggNOG" id="COG1546">
    <property type="taxonomic scope" value="Bacteria"/>
</dbReference>
<dbReference type="HOGENOM" id="CLU_030805_9_3_3"/>
<dbReference type="Proteomes" id="UP000001688">
    <property type="component" value="Chromosome"/>
</dbReference>
<dbReference type="CDD" id="cd00885">
    <property type="entry name" value="cinA"/>
    <property type="match status" value="1"/>
</dbReference>
<dbReference type="Gene3D" id="3.30.70.2860">
    <property type="match status" value="1"/>
</dbReference>
<dbReference type="Gene3D" id="3.90.950.20">
    <property type="entry name" value="CinA-like"/>
    <property type="match status" value="1"/>
</dbReference>
<dbReference type="Gene3D" id="3.40.980.10">
    <property type="entry name" value="MoaB/Mog-like domain"/>
    <property type="match status" value="1"/>
</dbReference>
<dbReference type="HAMAP" id="MF_00226_B">
    <property type="entry name" value="CinA_B"/>
    <property type="match status" value="1"/>
</dbReference>
<dbReference type="InterPro" id="IPR050101">
    <property type="entry name" value="CinA"/>
</dbReference>
<dbReference type="InterPro" id="IPR036653">
    <property type="entry name" value="CinA-like_C"/>
</dbReference>
<dbReference type="InterPro" id="IPR008136">
    <property type="entry name" value="CinA_C"/>
</dbReference>
<dbReference type="InterPro" id="IPR041424">
    <property type="entry name" value="CinA_KH"/>
</dbReference>
<dbReference type="InterPro" id="IPR008135">
    <property type="entry name" value="Competence-induced_CinA"/>
</dbReference>
<dbReference type="InterPro" id="IPR036425">
    <property type="entry name" value="MoaB/Mog-like_dom_sf"/>
</dbReference>
<dbReference type="InterPro" id="IPR001453">
    <property type="entry name" value="MoaB/Mog_dom"/>
</dbReference>
<dbReference type="NCBIfam" id="TIGR00200">
    <property type="entry name" value="cinA_nterm"/>
    <property type="match status" value="1"/>
</dbReference>
<dbReference type="NCBIfam" id="TIGR00199">
    <property type="entry name" value="PncC_domain"/>
    <property type="match status" value="1"/>
</dbReference>
<dbReference type="NCBIfam" id="NF001813">
    <property type="entry name" value="PRK00549.1"/>
    <property type="match status" value="1"/>
</dbReference>
<dbReference type="PANTHER" id="PTHR13939">
    <property type="entry name" value="NICOTINAMIDE-NUCLEOTIDE AMIDOHYDROLASE PNCC"/>
    <property type="match status" value="1"/>
</dbReference>
<dbReference type="PANTHER" id="PTHR13939:SF0">
    <property type="entry name" value="NMN AMIDOHYDROLASE-LIKE PROTEIN YFAY"/>
    <property type="match status" value="1"/>
</dbReference>
<dbReference type="Pfam" id="PF02464">
    <property type="entry name" value="CinA"/>
    <property type="match status" value="1"/>
</dbReference>
<dbReference type="Pfam" id="PF18146">
    <property type="entry name" value="CinA_KH"/>
    <property type="match status" value="1"/>
</dbReference>
<dbReference type="Pfam" id="PF00994">
    <property type="entry name" value="MoCF_biosynth"/>
    <property type="match status" value="1"/>
</dbReference>
<dbReference type="PIRSF" id="PIRSF006728">
    <property type="entry name" value="CinA"/>
    <property type="match status" value="1"/>
</dbReference>
<dbReference type="SMART" id="SM00852">
    <property type="entry name" value="MoCF_biosynth"/>
    <property type="match status" value="1"/>
</dbReference>
<dbReference type="SUPFAM" id="SSF142433">
    <property type="entry name" value="CinA-like"/>
    <property type="match status" value="1"/>
</dbReference>
<dbReference type="SUPFAM" id="SSF53218">
    <property type="entry name" value="Molybdenum cofactor biosynthesis proteins"/>
    <property type="match status" value="1"/>
</dbReference>
<protein>
    <recommendedName>
        <fullName evidence="1">CinA-like protein</fullName>
    </recommendedName>
</protein>